<name>DFB15_MOUSE</name>
<gene>
    <name type="primary">Defb15</name>
</gene>
<sequence>MKTFLFLFAVLFFLDPAKNAFFDEKCSRVNGRCTASCLKNEELVALCQKNLKCCVTVQPCGKSKSNQSDEGSGHMGTWG</sequence>
<accession>Q8R2I5</accession>
<accession>A2A4E5</accession>
<organism>
    <name type="scientific">Mus musculus</name>
    <name type="common">Mouse</name>
    <dbReference type="NCBI Taxonomy" id="10090"/>
    <lineage>
        <taxon>Eukaryota</taxon>
        <taxon>Metazoa</taxon>
        <taxon>Chordata</taxon>
        <taxon>Craniata</taxon>
        <taxon>Vertebrata</taxon>
        <taxon>Euteleostomi</taxon>
        <taxon>Mammalia</taxon>
        <taxon>Eutheria</taxon>
        <taxon>Euarchontoglires</taxon>
        <taxon>Glires</taxon>
        <taxon>Rodentia</taxon>
        <taxon>Myomorpha</taxon>
        <taxon>Muroidea</taxon>
        <taxon>Muridae</taxon>
        <taxon>Murinae</taxon>
        <taxon>Mus</taxon>
        <taxon>Mus</taxon>
    </lineage>
</organism>
<dbReference type="EMBL" id="AJ437648">
    <property type="protein sequence ID" value="CAD26897.1"/>
    <property type="molecule type" value="mRNA"/>
</dbReference>
<dbReference type="EMBL" id="AJ575428">
    <property type="protein sequence ID" value="CAE01401.1"/>
    <property type="molecule type" value="mRNA"/>
</dbReference>
<dbReference type="EMBL" id="AL590619">
    <property type="status" value="NOT_ANNOTATED_CDS"/>
    <property type="molecule type" value="Genomic_DNA"/>
</dbReference>
<dbReference type="CCDS" id="CCDS40288.1"/>
<dbReference type="RefSeq" id="NP_631968.1">
    <property type="nucleotide sequence ID" value="NM_139222.4"/>
</dbReference>
<dbReference type="SMR" id="Q8R2I5"/>
<dbReference type="FunCoup" id="Q8R2I5">
    <property type="interactions" value="4"/>
</dbReference>
<dbReference type="STRING" id="10090.ENSMUSP00000059763"/>
<dbReference type="PaxDb" id="10090-ENSMUSP00000059763"/>
<dbReference type="ProteomicsDB" id="279635"/>
<dbReference type="DNASU" id="246082"/>
<dbReference type="Ensembl" id="ENSMUST00000062586.3">
    <property type="protein sequence ID" value="ENSMUSP00000059763.3"/>
    <property type="gene ID" value="ENSMUSG00000048500.3"/>
</dbReference>
<dbReference type="GeneID" id="246082"/>
<dbReference type="KEGG" id="mmu:246082"/>
<dbReference type="UCSC" id="uc009lce.1">
    <property type="organism name" value="mouse"/>
</dbReference>
<dbReference type="AGR" id="MGI:2179202"/>
<dbReference type="CTD" id="246082"/>
<dbReference type="MGI" id="MGI:2179202">
    <property type="gene designation" value="Defb15"/>
</dbReference>
<dbReference type="VEuPathDB" id="HostDB:ENSMUSG00000048500"/>
<dbReference type="eggNOG" id="ENOG502TF62">
    <property type="taxonomic scope" value="Eukaryota"/>
</dbReference>
<dbReference type="GeneTree" id="ENSGT00950000183398"/>
<dbReference type="HOGENOM" id="CLU_187814_0_0_1"/>
<dbReference type="InParanoid" id="Q8R2I5"/>
<dbReference type="OMA" id="RGTCKNN"/>
<dbReference type="OrthoDB" id="9603676at2759"/>
<dbReference type="PhylomeDB" id="Q8R2I5"/>
<dbReference type="BioGRID-ORCS" id="246082">
    <property type="hits" value="1 hit in 57 CRISPR screens"/>
</dbReference>
<dbReference type="ChiTaRS" id="Defb15">
    <property type="organism name" value="mouse"/>
</dbReference>
<dbReference type="PRO" id="PR:Q8R2I5"/>
<dbReference type="Proteomes" id="UP000000589">
    <property type="component" value="Chromosome 8"/>
</dbReference>
<dbReference type="RNAct" id="Q8R2I5">
    <property type="molecule type" value="protein"/>
</dbReference>
<dbReference type="Bgee" id="ENSMUSG00000048500">
    <property type="expression patterns" value="Expressed in epididymal fat pad and 5 other cell types or tissues"/>
</dbReference>
<dbReference type="GO" id="GO:0005576">
    <property type="term" value="C:extracellular region"/>
    <property type="evidence" value="ECO:0007669"/>
    <property type="project" value="UniProtKB-SubCell"/>
</dbReference>
<dbReference type="GO" id="GO:0042742">
    <property type="term" value="P:defense response to bacterium"/>
    <property type="evidence" value="ECO:0007669"/>
    <property type="project" value="UniProtKB-KW"/>
</dbReference>
<dbReference type="GO" id="GO:0045087">
    <property type="term" value="P:innate immune response"/>
    <property type="evidence" value="ECO:0007669"/>
    <property type="project" value="InterPro"/>
</dbReference>
<dbReference type="Gene3D" id="3.10.360.10">
    <property type="entry name" value="Antimicrobial Peptide, Beta-defensin 2, Chain A"/>
    <property type="match status" value="1"/>
</dbReference>
<dbReference type="InterPro" id="IPR025933">
    <property type="entry name" value="Beta_defensin_dom"/>
</dbReference>
<dbReference type="Pfam" id="PF13841">
    <property type="entry name" value="Defensin_beta_2"/>
    <property type="match status" value="1"/>
</dbReference>
<feature type="signal peptide" evidence="2">
    <location>
        <begin position="1"/>
        <end position="20"/>
    </location>
</feature>
<feature type="chain" id="PRO_0000006943" description="Beta-defensin 15">
    <location>
        <begin position="21"/>
        <end position="79"/>
    </location>
</feature>
<feature type="disulfide bond" evidence="1">
    <location>
        <begin position="26"/>
        <end position="53"/>
    </location>
</feature>
<feature type="disulfide bond" evidence="1">
    <location>
        <begin position="33"/>
        <end position="47"/>
    </location>
</feature>
<feature type="disulfide bond" evidence="1">
    <location>
        <begin position="37"/>
        <end position="54"/>
    </location>
</feature>
<proteinExistence type="evidence at transcript level"/>
<evidence type="ECO:0000250" key="1"/>
<evidence type="ECO:0000255" key="2"/>
<evidence type="ECO:0000269" key="3">
    <source>
    </source>
</evidence>
<evidence type="ECO:0000305" key="4"/>
<keyword id="KW-0044">Antibiotic</keyword>
<keyword id="KW-0929">Antimicrobial</keyword>
<keyword id="KW-0211">Defensin</keyword>
<keyword id="KW-1015">Disulfide bond</keyword>
<keyword id="KW-1185">Reference proteome</keyword>
<keyword id="KW-0964">Secreted</keyword>
<keyword id="KW-0732">Signal</keyword>
<protein>
    <recommendedName>
        <fullName>Beta-defensin 15</fullName>
        <shortName>BD-15</shortName>
        <shortName>mBD-15</shortName>
    </recommendedName>
    <alternativeName>
        <fullName>Defensin, beta 15</fullName>
    </alternativeName>
</protein>
<reference key="1">
    <citation type="journal article" date="2003" name="Mol. Biol. Evol.">
        <title>Signal sequence conservation and mature peptide divergence within subgroups of the murine beta-defensin gene family.</title>
        <authorList>
            <person name="Morrison G.M."/>
            <person name="Semple C.A.M."/>
            <person name="Kilanowski F.M."/>
            <person name="Hill R.E."/>
            <person name="Dorin J.R."/>
        </authorList>
    </citation>
    <scope>NUCLEOTIDE SEQUENCE [MRNA]</scope>
    <source>
        <strain>C57BL/6N</strain>
        <tissue>Testis</tissue>
    </source>
</reference>
<reference key="2">
    <citation type="journal article" date="2004" name="J. Biol. Chem.">
        <title>Identification on mouse chromosome 8 of new beta-defensin genes with regionally specific expression in the male reproductive organ.</title>
        <authorList>
            <person name="Zaballos A."/>
            <person name="Villares R."/>
            <person name="Albar J.P."/>
            <person name="Martinez-A C."/>
            <person name="Marquez G."/>
        </authorList>
    </citation>
    <scope>NUCLEOTIDE SEQUENCE [MRNA]</scope>
    <scope>TISSUE SPECIFICITY</scope>
    <source>
        <strain>BALB/cJ</strain>
        <tissue>Epididymis</tissue>
    </source>
</reference>
<reference key="3">
    <citation type="journal article" date="2009" name="PLoS Biol.">
        <title>Lineage-specific biology revealed by a finished genome assembly of the mouse.</title>
        <authorList>
            <person name="Church D.M."/>
            <person name="Goodstadt L."/>
            <person name="Hillier L.W."/>
            <person name="Zody M.C."/>
            <person name="Goldstein S."/>
            <person name="She X."/>
            <person name="Bult C.J."/>
            <person name="Agarwala R."/>
            <person name="Cherry J.L."/>
            <person name="DiCuccio M."/>
            <person name="Hlavina W."/>
            <person name="Kapustin Y."/>
            <person name="Meric P."/>
            <person name="Maglott D."/>
            <person name="Birtle Z."/>
            <person name="Marques A.C."/>
            <person name="Graves T."/>
            <person name="Zhou S."/>
            <person name="Teague B."/>
            <person name="Potamousis K."/>
            <person name="Churas C."/>
            <person name="Place M."/>
            <person name="Herschleb J."/>
            <person name="Runnheim R."/>
            <person name="Forrest D."/>
            <person name="Amos-Landgraf J."/>
            <person name="Schwartz D.C."/>
            <person name="Cheng Z."/>
            <person name="Lindblad-Toh K."/>
            <person name="Eichler E.E."/>
            <person name="Ponting C.P."/>
        </authorList>
    </citation>
    <scope>NUCLEOTIDE SEQUENCE [LARGE SCALE GENOMIC DNA]</scope>
    <source>
        <strain>C57BL/6J</strain>
    </source>
</reference>
<comment type="function">
    <text evidence="1">Has antibacterial activity.</text>
</comment>
<comment type="subcellular location">
    <subcellularLocation>
        <location evidence="1">Secreted</location>
    </subcellularLocation>
</comment>
<comment type="tissue specificity">
    <text evidence="3">Expressed in testis and to a lesser extent in epididymis (caput, corpus and cauda). Also weakly expressed in kidneys and colon.</text>
</comment>
<comment type="similarity">
    <text evidence="4">Belongs to the beta-defensin family.</text>
</comment>